<proteinExistence type="inferred from homology"/>
<evidence type="ECO:0000255" key="1">
    <source>
        <dbReference type="HAMAP-Rule" id="MF_01595"/>
    </source>
</evidence>
<feature type="chain" id="PRO_0000329534" description="Polyribonucleotide nucleotidyltransferase">
    <location>
        <begin position="1"/>
        <end position="699"/>
    </location>
</feature>
<feature type="domain" description="KH" evidence="1">
    <location>
        <begin position="555"/>
        <end position="614"/>
    </location>
</feature>
<feature type="domain" description="S1 motif" evidence="1">
    <location>
        <begin position="624"/>
        <end position="692"/>
    </location>
</feature>
<feature type="binding site" evidence="1">
    <location>
        <position position="488"/>
    </location>
    <ligand>
        <name>Mg(2+)</name>
        <dbReference type="ChEBI" id="CHEBI:18420"/>
    </ligand>
</feature>
<feature type="binding site" evidence="1">
    <location>
        <position position="494"/>
    </location>
    <ligand>
        <name>Mg(2+)</name>
        <dbReference type="ChEBI" id="CHEBI:18420"/>
    </ligand>
</feature>
<protein>
    <recommendedName>
        <fullName evidence="1">Polyribonucleotide nucleotidyltransferase</fullName>
        <ecNumber evidence="1">2.7.7.8</ecNumber>
    </recommendedName>
    <alternativeName>
        <fullName evidence="1">Polynucleotide phosphorylase</fullName>
        <shortName evidence="1">PNPase</shortName>
    </alternativeName>
</protein>
<sequence length="699" mass="77476">MLDPIIHKFKYGQHTVILDIGTIARQANAAVMVSMSDTTVLVTVVSSNQVRLEQDFFPLVVNYQERTYAAGKFPGGFFRREGRPSENETLTSRLIDRPIRPLFPKGFINDVQVVATVVSVNPQVNPDIVAIIGVSAALSLSDIPFFGPIGAARVGYIKNQYVLNPTTTELSNSKLDLVISGTESNILMVESESCLLSEKEILDAIIFGHEQQQIVIHNINKLVKKVGKTKYSWNEKEVNISLKTYLSELYESRAQDIYCFFDKKERHAQVDSIKKDIVKTVLNSYQHAAVDEKEIMYLLNYLEAQSIRYRILTNKLRIDGRSQDTIRKIDIKTGILPRTHGSALFTRGDTQALVAVTLGTERDAQNIDGLTGIRVDRFLLHYNFPPYCVGEIGVIGAPKRREIGHGRLAKRGMLAVMPNANEFPYTIRVVSEITESNGSSSMASICGTSLALMDAGVPIKAAVAGVAMGLIKEGNDFVVLSDIVSDEDHIGDMDFKVSGSRQGITALQMDIKTDGITYDIINIALKKAKNARLQILDVMEQIIKFPNQEISKFAPRIYSIKVNPDKIKDVIGKGGSVIRSLTEETNTIIDIEDNGIIKIVALDYDKAKQAIRRINDITANVEIGAVYTGKVSHIVEFGAFVTILSGKEGLVHISQISERRINKVTDYLKLGQKVLVKVLEIDRQGRIRLSMKGVHQVSA</sequence>
<reference key="1">
    <citation type="journal article" date="2005" name="Genome Res.">
        <title>Genome sequence of Blochmannia pennsylvanicus indicates parallel evolutionary trends among bacterial mutualists of insects.</title>
        <authorList>
            <person name="Degnan P.H."/>
            <person name="Lazarus A.B."/>
            <person name="Wernegreen J.J."/>
        </authorList>
    </citation>
    <scope>NUCLEOTIDE SEQUENCE [LARGE SCALE GENOMIC DNA]</scope>
    <source>
        <strain>BPEN</strain>
    </source>
</reference>
<comment type="function">
    <text evidence="1">Involved in mRNA degradation. Catalyzes the phosphorolysis of single-stranded polyribonucleotides processively in the 3'- to 5'-direction.</text>
</comment>
<comment type="catalytic activity">
    <reaction evidence="1">
        <text>RNA(n+1) + phosphate = RNA(n) + a ribonucleoside 5'-diphosphate</text>
        <dbReference type="Rhea" id="RHEA:22096"/>
        <dbReference type="Rhea" id="RHEA-COMP:14527"/>
        <dbReference type="Rhea" id="RHEA-COMP:17342"/>
        <dbReference type="ChEBI" id="CHEBI:43474"/>
        <dbReference type="ChEBI" id="CHEBI:57930"/>
        <dbReference type="ChEBI" id="CHEBI:140395"/>
        <dbReference type="EC" id="2.7.7.8"/>
    </reaction>
</comment>
<comment type="cofactor">
    <cofactor evidence="1">
        <name>Mg(2+)</name>
        <dbReference type="ChEBI" id="CHEBI:18420"/>
    </cofactor>
</comment>
<comment type="subunit">
    <text evidence="1">Component of the RNA degradosome, which is a multiprotein complex involved in RNA processing and mRNA degradation.</text>
</comment>
<comment type="subcellular location">
    <subcellularLocation>
        <location evidence="1">Cytoplasm</location>
    </subcellularLocation>
</comment>
<comment type="similarity">
    <text evidence="1">Belongs to the polyribonucleotide nucleotidyltransferase family.</text>
</comment>
<dbReference type="EC" id="2.7.7.8" evidence="1"/>
<dbReference type="EMBL" id="CP000016">
    <property type="protein sequence ID" value="AAZ40752.1"/>
    <property type="molecule type" value="Genomic_DNA"/>
</dbReference>
<dbReference type="RefSeq" id="WP_011282659.1">
    <property type="nucleotide sequence ID" value="NC_007292.1"/>
</dbReference>
<dbReference type="SMR" id="Q493T3"/>
<dbReference type="STRING" id="291272.BPEN_112"/>
<dbReference type="KEGG" id="bpn:BPEN_112"/>
<dbReference type="eggNOG" id="COG1185">
    <property type="taxonomic scope" value="Bacteria"/>
</dbReference>
<dbReference type="HOGENOM" id="CLU_004217_2_2_6"/>
<dbReference type="OrthoDB" id="9804305at2"/>
<dbReference type="Proteomes" id="UP000007794">
    <property type="component" value="Chromosome"/>
</dbReference>
<dbReference type="GO" id="GO:0005829">
    <property type="term" value="C:cytosol"/>
    <property type="evidence" value="ECO:0007669"/>
    <property type="project" value="TreeGrafter"/>
</dbReference>
<dbReference type="GO" id="GO:0000175">
    <property type="term" value="F:3'-5'-RNA exonuclease activity"/>
    <property type="evidence" value="ECO:0007669"/>
    <property type="project" value="TreeGrafter"/>
</dbReference>
<dbReference type="GO" id="GO:0000287">
    <property type="term" value="F:magnesium ion binding"/>
    <property type="evidence" value="ECO:0007669"/>
    <property type="project" value="UniProtKB-UniRule"/>
</dbReference>
<dbReference type="GO" id="GO:0004654">
    <property type="term" value="F:polyribonucleotide nucleotidyltransferase activity"/>
    <property type="evidence" value="ECO:0007669"/>
    <property type="project" value="UniProtKB-UniRule"/>
</dbReference>
<dbReference type="GO" id="GO:0003723">
    <property type="term" value="F:RNA binding"/>
    <property type="evidence" value="ECO:0007669"/>
    <property type="project" value="UniProtKB-UniRule"/>
</dbReference>
<dbReference type="GO" id="GO:0006402">
    <property type="term" value="P:mRNA catabolic process"/>
    <property type="evidence" value="ECO:0007669"/>
    <property type="project" value="UniProtKB-UniRule"/>
</dbReference>
<dbReference type="GO" id="GO:0006396">
    <property type="term" value="P:RNA processing"/>
    <property type="evidence" value="ECO:0007669"/>
    <property type="project" value="InterPro"/>
</dbReference>
<dbReference type="CDD" id="cd02393">
    <property type="entry name" value="KH-I_PNPase"/>
    <property type="match status" value="1"/>
</dbReference>
<dbReference type="CDD" id="cd11363">
    <property type="entry name" value="RNase_PH_PNPase_1"/>
    <property type="match status" value="1"/>
</dbReference>
<dbReference type="CDD" id="cd11364">
    <property type="entry name" value="RNase_PH_PNPase_2"/>
    <property type="match status" value="1"/>
</dbReference>
<dbReference type="CDD" id="cd04472">
    <property type="entry name" value="S1_PNPase"/>
    <property type="match status" value="1"/>
</dbReference>
<dbReference type="FunFam" id="2.40.50.140:FF:000023">
    <property type="entry name" value="Polyribonucleotide nucleotidyltransferase"/>
    <property type="match status" value="1"/>
</dbReference>
<dbReference type="FunFam" id="3.30.1370.10:FF:000001">
    <property type="entry name" value="Polyribonucleotide nucleotidyltransferase"/>
    <property type="match status" value="1"/>
</dbReference>
<dbReference type="FunFam" id="3.30.230.70:FF:000001">
    <property type="entry name" value="Polyribonucleotide nucleotidyltransferase"/>
    <property type="match status" value="1"/>
</dbReference>
<dbReference type="FunFam" id="3.30.230.70:FF:000002">
    <property type="entry name" value="Polyribonucleotide nucleotidyltransferase"/>
    <property type="match status" value="1"/>
</dbReference>
<dbReference type="Gene3D" id="3.30.230.70">
    <property type="entry name" value="GHMP Kinase, N-terminal domain"/>
    <property type="match status" value="2"/>
</dbReference>
<dbReference type="Gene3D" id="3.30.1370.10">
    <property type="entry name" value="K Homology domain, type 1"/>
    <property type="match status" value="1"/>
</dbReference>
<dbReference type="Gene3D" id="2.40.50.140">
    <property type="entry name" value="Nucleic acid-binding proteins"/>
    <property type="match status" value="1"/>
</dbReference>
<dbReference type="HAMAP" id="MF_01595">
    <property type="entry name" value="PNPase"/>
    <property type="match status" value="1"/>
</dbReference>
<dbReference type="InterPro" id="IPR001247">
    <property type="entry name" value="ExoRNase_PH_dom1"/>
</dbReference>
<dbReference type="InterPro" id="IPR015847">
    <property type="entry name" value="ExoRNase_PH_dom2"/>
</dbReference>
<dbReference type="InterPro" id="IPR036345">
    <property type="entry name" value="ExoRNase_PH_dom2_sf"/>
</dbReference>
<dbReference type="InterPro" id="IPR004087">
    <property type="entry name" value="KH_dom"/>
</dbReference>
<dbReference type="InterPro" id="IPR004088">
    <property type="entry name" value="KH_dom_type_1"/>
</dbReference>
<dbReference type="InterPro" id="IPR036612">
    <property type="entry name" value="KH_dom_type_1_sf"/>
</dbReference>
<dbReference type="InterPro" id="IPR012340">
    <property type="entry name" value="NA-bd_OB-fold"/>
</dbReference>
<dbReference type="InterPro" id="IPR012162">
    <property type="entry name" value="PNPase"/>
</dbReference>
<dbReference type="InterPro" id="IPR027408">
    <property type="entry name" value="PNPase/RNase_PH_dom_sf"/>
</dbReference>
<dbReference type="InterPro" id="IPR015848">
    <property type="entry name" value="PNPase_PH_RNA-bd_bac/org-type"/>
</dbReference>
<dbReference type="InterPro" id="IPR036456">
    <property type="entry name" value="PNPase_PH_RNA-bd_sf"/>
</dbReference>
<dbReference type="InterPro" id="IPR020568">
    <property type="entry name" value="Ribosomal_Su5_D2-typ_SF"/>
</dbReference>
<dbReference type="InterPro" id="IPR003029">
    <property type="entry name" value="S1_domain"/>
</dbReference>
<dbReference type="NCBIfam" id="TIGR03591">
    <property type="entry name" value="polynuc_phos"/>
    <property type="match status" value="1"/>
</dbReference>
<dbReference type="NCBIfam" id="NF008805">
    <property type="entry name" value="PRK11824.1"/>
    <property type="match status" value="1"/>
</dbReference>
<dbReference type="PANTHER" id="PTHR11252">
    <property type="entry name" value="POLYRIBONUCLEOTIDE NUCLEOTIDYLTRANSFERASE"/>
    <property type="match status" value="1"/>
</dbReference>
<dbReference type="PANTHER" id="PTHR11252:SF0">
    <property type="entry name" value="POLYRIBONUCLEOTIDE NUCLEOTIDYLTRANSFERASE 1, MITOCHONDRIAL"/>
    <property type="match status" value="1"/>
</dbReference>
<dbReference type="Pfam" id="PF00013">
    <property type="entry name" value="KH_1"/>
    <property type="match status" value="1"/>
</dbReference>
<dbReference type="Pfam" id="PF03726">
    <property type="entry name" value="PNPase"/>
    <property type="match status" value="1"/>
</dbReference>
<dbReference type="Pfam" id="PF01138">
    <property type="entry name" value="RNase_PH"/>
    <property type="match status" value="2"/>
</dbReference>
<dbReference type="Pfam" id="PF03725">
    <property type="entry name" value="RNase_PH_C"/>
    <property type="match status" value="2"/>
</dbReference>
<dbReference type="Pfam" id="PF00575">
    <property type="entry name" value="S1"/>
    <property type="match status" value="1"/>
</dbReference>
<dbReference type="PIRSF" id="PIRSF005499">
    <property type="entry name" value="PNPase"/>
    <property type="match status" value="1"/>
</dbReference>
<dbReference type="SMART" id="SM00322">
    <property type="entry name" value="KH"/>
    <property type="match status" value="1"/>
</dbReference>
<dbReference type="SMART" id="SM00316">
    <property type="entry name" value="S1"/>
    <property type="match status" value="1"/>
</dbReference>
<dbReference type="SUPFAM" id="SSF54791">
    <property type="entry name" value="Eukaryotic type KH-domain (KH-domain type I)"/>
    <property type="match status" value="1"/>
</dbReference>
<dbReference type="SUPFAM" id="SSF50249">
    <property type="entry name" value="Nucleic acid-binding proteins"/>
    <property type="match status" value="1"/>
</dbReference>
<dbReference type="SUPFAM" id="SSF46915">
    <property type="entry name" value="Polynucleotide phosphorylase/guanosine pentaphosphate synthase (PNPase/GPSI), domain 3"/>
    <property type="match status" value="1"/>
</dbReference>
<dbReference type="SUPFAM" id="SSF55666">
    <property type="entry name" value="Ribonuclease PH domain 2-like"/>
    <property type="match status" value="2"/>
</dbReference>
<dbReference type="SUPFAM" id="SSF54211">
    <property type="entry name" value="Ribosomal protein S5 domain 2-like"/>
    <property type="match status" value="2"/>
</dbReference>
<dbReference type="PROSITE" id="PS50084">
    <property type="entry name" value="KH_TYPE_1"/>
    <property type="match status" value="1"/>
</dbReference>
<dbReference type="PROSITE" id="PS50126">
    <property type="entry name" value="S1"/>
    <property type="match status" value="1"/>
</dbReference>
<gene>
    <name evidence="1" type="primary">pnp</name>
    <name type="ordered locus">BPEN_112</name>
</gene>
<keyword id="KW-0963">Cytoplasm</keyword>
<keyword id="KW-0460">Magnesium</keyword>
<keyword id="KW-0479">Metal-binding</keyword>
<keyword id="KW-0548">Nucleotidyltransferase</keyword>
<keyword id="KW-1185">Reference proteome</keyword>
<keyword id="KW-0694">RNA-binding</keyword>
<keyword id="KW-0808">Transferase</keyword>
<name>PNP_BLOPB</name>
<organism>
    <name type="scientific">Blochmanniella pennsylvanica (strain BPEN)</name>
    <dbReference type="NCBI Taxonomy" id="291272"/>
    <lineage>
        <taxon>Bacteria</taxon>
        <taxon>Pseudomonadati</taxon>
        <taxon>Pseudomonadota</taxon>
        <taxon>Gammaproteobacteria</taxon>
        <taxon>Enterobacterales</taxon>
        <taxon>Enterobacteriaceae</taxon>
        <taxon>ant endosymbionts</taxon>
        <taxon>Candidatus Blochmanniella</taxon>
    </lineage>
</organism>
<accession>Q493T3</accession>